<keyword id="KW-0414">Isoprene biosynthesis</keyword>
<keyword id="KW-0456">Lyase</keyword>
<keyword id="KW-0479">Metal-binding</keyword>
<proteinExistence type="inferred from homology"/>
<gene>
    <name evidence="1" type="primary">ispF</name>
    <name type="ordered locus">YPA_2783</name>
</gene>
<organism>
    <name type="scientific">Yersinia pestis bv. Antiqua (strain Antiqua)</name>
    <dbReference type="NCBI Taxonomy" id="360102"/>
    <lineage>
        <taxon>Bacteria</taxon>
        <taxon>Pseudomonadati</taxon>
        <taxon>Pseudomonadota</taxon>
        <taxon>Gammaproteobacteria</taxon>
        <taxon>Enterobacterales</taxon>
        <taxon>Yersiniaceae</taxon>
        <taxon>Yersinia</taxon>
    </lineage>
</organism>
<feature type="chain" id="PRO_1000022893" description="2-C-methyl-D-erythritol 2,4-cyclodiphosphate synthase">
    <location>
        <begin position="1"/>
        <end position="162"/>
    </location>
</feature>
<feature type="binding site" evidence="1">
    <location>
        <begin position="8"/>
        <end position="10"/>
    </location>
    <ligand>
        <name>4-CDP-2-C-methyl-D-erythritol 2-phosphate</name>
        <dbReference type="ChEBI" id="CHEBI:57919"/>
    </ligand>
</feature>
<feature type="binding site" evidence="1">
    <location>
        <position position="8"/>
    </location>
    <ligand>
        <name>a divalent metal cation</name>
        <dbReference type="ChEBI" id="CHEBI:60240"/>
    </ligand>
</feature>
<feature type="binding site" evidence="1">
    <location>
        <position position="10"/>
    </location>
    <ligand>
        <name>a divalent metal cation</name>
        <dbReference type="ChEBI" id="CHEBI:60240"/>
    </ligand>
</feature>
<feature type="binding site" evidence="1">
    <location>
        <begin position="36"/>
        <end position="37"/>
    </location>
    <ligand>
        <name>4-CDP-2-C-methyl-D-erythritol 2-phosphate</name>
        <dbReference type="ChEBI" id="CHEBI:57919"/>
    </ligand>
</feature>
<feature type="binding site" evidence="1">
    <location>
        <position position="44"/>
    </location>
    <ligand>
        <name>a divalent metal cation</name>
        <dbReference type="ChEBI" id="CHEBI:60240"/>
    </ligand>
</feature>
<feature type="binding site" evidence="1">
    <location>
        <begin position="58"/>
        <end position="60"/>
    </location>
    <ligand>
        <name>4-CDP-2-C-methyl-D-erythritol 2-phosphate</name>
        <dbReference type="ChEBI" id="CHEBI:57919"/>
    </ligand>
</feature>
<feature type="binding site" evidence="1">
    <location>
        <begin position="63"/>
        <end position="67"/>
    </location>
    <ligand>
        <name>4-CDP-2-C-methyl-D-erythritol 2-phosphate</name>
        <dbReference type="ChEBI" id="CHEBI:57919"/>
    </ligand>
</feature>
<feature type="binding site" evidence="1">
    <location>
        <begin position="102"/>
        <end position="108"/>
    </location>
    <ligand>
        <name>4-CDP-2-C-methyl-D-erythritol 2-phosphate</name>
        <dbReference type="ChEBI" id="CHEBI:57919"/>
    </ligand>
</feature>
<feature type="binding site" evidence="1">
    <location>
        <begin position="134"/>
        <end position="137"/>
    </location>
    <ligand>
        <name>4-CDP-2-C-methyl-D-erythritol 2-phosphate</name>
        <dbReference type="ChEBI" id="CHEBI:57919"/>
    </ligand>
</feature>
<feature type="binding site" evidence="1">
    <location>
        <position position="141"/>
    </location>
    <ligand>
        <name>4-CDP-2-C-methyl-D-erythritol 2-phosphate</name>
        <dbReference type="ChEBI" id="CHEBI:57919"/>
    </ligand>
</feature>
<feature type="binding site" evidence="1">
    <location>
        <position position="144"/>
    </location>
    <ligand>
        <name>4-CDP-2-C-methyl-D-erythritol 2-phosphate</name>
        <dbReference type="ChEBI" id="CHEBI:57919"/>
    </ligand>
</feature>
<feature type="site" description="Transition state stabilizer" evidence="1">
    <location>
        <position position="36"/>
    </location>
</feature>
<feature type="site" description="Transition state stabilizer" evidence="1">
    <location>
        <position position="135"/>
    </location>
</feature>
<name>ISPF_YERPA</name>
<comment type="function">
    <text evidence="1">Involved in the biosynthesis of isopentenyl diphosphate (IPP) and dimethylallyl diphosphate (DMAPP), two major building blocks of isoprenoid compounds. Catalyzes the conversion of 4-diphosphocytidyl-2-C-methyl-D-erythritol 2-phosphate (CDP-ME2P) to 2-C-methyl-D-erythritol 2,4-cyclodiphosphate (ME-CPP) with a corresponding release of cytidine 5-monophosphate (CMP).</text>
</comment>
<comment type="catalytic activity">
    <reaction evidence="1">
        <text>4-CDP-2-C-methyl-D-erythritol 2-phosphate = 2-C-methyl-D-erythritol 2,4-cyclic diphosphate + CMP</text>
        <dbReference type="Rhea" id="RHEA:23864"/>
        <dbReference type="ChEBI" id="CHEBI:57919"/>
        <dbReference type="ChEBI" id="CHEBI:58483"/>
        <dbReference type="ChEBI" id="CHEBI:60377"/>
        <dbReference type="EC" id="4.6.1.12"/>
    </reaction>
</comment>
<comment type="cofactor">
    <cofactor evidence="1">
        <name>a divalent metal cation</name>
        <dbReference type="ChEBI" id="CHEBI:60240"/>
    </cofactor>
    <text evidence="1">Binds 1 divalent metal cation per subunit.</text>
</comment>
<comment type="pathway">
    <text evidence="1">Isoprenoid biosynthesis; isopentenyl diphosphate biosynthesis via DXP pathway; isopentenyl diphosphate from 1-deoxy-D-xylulose 5-phosphate: step 4/6.</text>
</comment>
<comment type="subunit">
    <text evidence="1">Homotrimer.</text>
</comment>
<comment type="similarity">
    <text evidence="1">Belongs to the IspF family.</text>
</comment>
<sequence length="162" mass="17182">MRIGHGFDVHKFGENGSGPLIIGGVRIPYEKGLLAHSDGDVALHAATDALLGAAALGDIGKLFPDTDPAFKGADSRGLLREAYRRILAKGYKLGNLDITIIAQAPKMAPHIPQMRVNLAEDLQCHMDDINVKATTTEQLGFTGRGEGIACEAVVLLVNVEQG</sequence>
<protein>
    <recommendedName>
        <fullName evidence="1">2-C-methyl-D-erythritol 2,4-cyclodiphosphate synthase</fullName>
        <shortName evidence="1">MECDP-synthase</shortName>
        <shortName evidence="1">MECPP-synthase</shortName>
        <shortName evidence="1">MECPS</shortName>
        <ecNumber evidence="1">4.6.1.12</ecNumber>
    </recommendedName>
</protein>
<evidence type="ECO:0000255" key="1">
    <source>
        <dbReference type="HAMAP-Rule" id="MF_00107"/>
    </source>
</evidence>
<dbReference type="EC" id="4.6.1.12" evidence="1"/>
<dbReference type="EMBL" id="CP000308">
    <property type="protein sequence ID" value="ABG14745.1"/>
    <property type="molecule type" value="Genomic_DNA"/>
</dbReference>
<dbReference type="RefSeq" id="WP_002209392.1">
    <property type="nucleotide sequence ID" value="NZ_CP009906.1"/>
</dbReference>
<dbReference type="SMR" id="Q1C477"/>
<dbReference type="GeneID" id="96664269"/>
<dbReference type="KEGG" id="ypa:YPA_2783"/>
<dbReference type="UniPathway" id="UPA00056">
    <property type="reaction ID" value="UER00095"/>
</dbReference>
<dbReference type="Proteomes" id="UP000001971">
    <property type="component" value="Chromosome"/>
</dbReference>
<dbReference type="GO" id="GO:0008685">
    <property type="term" value="F:2-C-methyl-D-erythritol 2,4-cyclodiphosphate synthase activity"/>
    <property type="evidence" value="ECO:0007669"/>
    <property type="project" value="UniProtKB-UniRule"/>
</dbReference>
<dbReference type="GO" id="GO:0046872">
    <property type="term" value="F:metal ion binding"/>
    <property type="evidence" value="ECO:0007669"/>
    <property type="project" value="UniProtKB-KW"/>
</dbReference>
<dbReference type="GO" id="GO:0019288">
    <property type="term" value="P:isopentenyl diphosphate biosynthetic process, methylerythritol 4-phosphate pathway"/>
    <property type="evidence" value="ECO:0007669"/>
    <property type="project" value="UniProtKB-UniRule"/>
</dbReference>
<dbReference type="GO" id="GO:0016114">
    <property type="term" value="P:terpenoid biosynthetic process"/>
    <property type="evidence" value="ECO:0007669"/>
    <property type="project" value="InterPro"/>
</dbReference>
<dbReference type="CDD" id="cd00554">
    <property type="entry name" value="MECDP_synthase"/>
    <property type="match status" value="1"/>
</dbReference>
<dbReference type="FunFam" id="3.30.1330.50:FF:000001">
    <property type="entry name" value="2-C-methyl-D-erythritol 2,4-cyclodiphosphate synthase"/>
    <property type="match status" value="1"/>
</dbReference>
<dbReference type="Gene3D" id="3.30.1330.50">
    <property type="entry name" value="2-C-methyl-D-erythritol 2,4-cyclodiphosphate synthase"/>
    <property type="match status" value="1"/>
</dbReference>
<dbReference type="HAMAP" id="MF_00107">
    <property type="entry name" value="IspF"/>
    <property type="match status" value="1"/>
</dbReference>
<dbReference type="InterPro" id="IPR003526">
    <property type="entry name" value="MECDP_synthase"/>
</dbReference>
<dbReference type="InterPro" id="IPR020555">
    <property type="entry name" value="MECDP_synthase_CS"/>
</dbReference>
<dbReference type="InterPro" id="IPR036571">
    <property type="entry name" value="MECDP_synthase_sf"/>
</dbReference>
<dbReference type="NCBIfam" id="TIGR00151">
    <property type="entry name" value="ispF"/>
    <property type="match status" value="1"/>
</dbReference>
<dbReference type="PANTHER" id="PTHR43181">
    <property type="entry name" value="2-C-METHYL-D-ERYTHRITOL 2,4-CYCLODIPHOSPHATE SYNTHASE, CHLOROPLASTIC"/>
    <property type="match status" value="1"/>
</dbReference>
<dbReference type="PANTHER" id="PTHR43181:SF1">
    <property type="entry name" value="2-C-METHYL-D-ERYTHRITOL 2,4-CYCLODIPHOSPHATE SYNTHASE, CHLOROPLASTIC"/>
    <property type="match status" value="1"/>
</dbReference>
<dbReference type="Pfam" id="PF02542">
    <property type="entry name" value="YgbB"/>
    <property type="match status" value="1"/>
</dbReference>
<dbReference type="SUPFAM" id="SSF69765">
    <property type="entry name" value="IpsF-like"/>
    <property type="match status" value="1"/>
</dbReference>
<dbReference type="PROSITE" id="PS01350">
    <property type="entry name" value="ISPF"/>
    <property type="match status" value="1"/>
</dbReference>
<reference key="1">
    <citation type="journal article" date="2006" name="J. Bacteriol.">
        <title>Complete genome sequence of Yersinia pestis strains Antiqua and Nepal516: evidence of gene reduction in an emerging pathogen.</title>
        <authorList>
            <person name="Chain P.S.G."/>
            <person name="Hu P."/>
            <person name="Malfatti S.A."/>
            <person name="Radnedge L."/>
            <person name="Larimer F."/>
            <person name="Vergez L.M."/>
            <person name="Worsham P."/>
            <person name="Chu M.C."/>
            <person name="Andersen G.L."/>
        </authorList>
    </citation>
    <scope>NUCLEOTIDE SEQUENCE [LARGE SCALE GENOMIC DNA]</scope>
    <source>
        <strain>Antiqua</strain>
    </source>
</reference>
<accession>Q1C477</accession>